<protein>
    <recommendedName>
        <fullName>Carbonic anhydrase</fullName>
        <ecNumber>4.2.1.1</ecNumber>
    </recommendedName>
    <alternativeName>
        <fullName>Carbonate dehydratase</fullName>
    </alternativeName>
</protein>
<dbReference type="EC" id="4.2.1.1"/>
<dbReference type="EMBL" id="AACD01000029">
    <property type="protein sequence ID" value="EAA64970.1"/>
    <property type="status" value="ALT_SEQ"/>
    <property type="molecule type" value="Genomic_DNA"/>
</dbReference>
<dbReference type="EMBL" id="BN001307">
    <property type="protein sequence ID" value="CBF85595.1"/>
    <property type="status" value="ALT_INIT"/>
    <property type="molecule type" value="Genomic_DNA"/>
</dbReference>
<dbReference type="RefSeq" id="XP_659409.1">
    <property type="nucleotide sequence ID" value="XM_654317.1"/>
</dbReference>
<dbReference type="SMR" id="Q5BCC5"/>
<dbReference type="FunCoup" id="Q5BCC5">
    <property type="interactions" value="89"/>
</dbReference>
<dbReference type="STRING" id="227321.Q5BCC5"/>
<dbReference type="eggNOG" id="KOG1578">
    <property type="taxonomic scope" value="Eukaryota"/>
</dbReference>
<dbReference type="HOGENOM" id="CLU_053879_3_1_1"/>
<dbReference type="InParanoid" id="Q5BCC5"/>
<dbReference type="Proteomes" id="UP000000560">
    <property type="component" value="Chromosome VII"/>
</dbReference>
<dbReference type="GO" id="GO:0005737">
    <property type="term" value="C:cytoplasm"/>
    <property type="evidence" value="ECO:0000318"/>
    <property type="project" value="GO_Central"/>
</dbReference>
<dbReference type="GO" id="GO:0004089">
    <property type="term" value="F:carbonate dehydratase activity"/>
    <property type="evidence" value="ECO:0000318"/>
    <property type="project" value="GO_Central"/>
</dbReference>
<dbReference type="GO" id="GO:0008270">
    <property type="term" value="F:zinc ion binding"/>
    <property type="evidence" value="ECO:0007669"/>
    <property type="project" value="InterPro"/>
</dbReference>
<dbReference type="GO" id="GO:0015976">
    <property type="term" value="P:carbon utilization"/>
    <property type="evidence" value="ECO:0007669"/>
    <property type="project" value="InterPro"/>
</dbReference>
<dbReference type="GO" id="GO:0071244">
    <property type="term" value="P:cellular response to carbon dioxide"/>
    <property type="evidence" value="ECO:0000318"/>
    <property type="project" value="GO_Central"/>
</dbReference>
<dbReference type="GO" id="GO:0034599">
    <property type="term" value="P:cellular response to oxidative stress"/>
    <property type="evidence" value="ECO:0000318"/>
    <property type="project" value="GO_Central"/>
</dbReference>
<dbReference type="CDD" id="cd00883">
    <property type="entry name" value="beta_CA_cladeA"/>
    <property type="match status" value="1"/>
</dbReference>
<dbReference type="FunFam" id="3.40.1050.10:FF:000001">
    <property type="entry name" value="Carbonic anhydrase"/>
    <property type="match status" value="1"/>
</dbReference>
<dbReference type="Gene3D" id="3.40.1050.10">
    <property type="entry name" value="Carbonic anhydrase"/>
    <property type="match status" value="1"/>
</dbReference>
<dbReference type="InterPro" id="IPR001765">
    <property type="entry name" value="Carbonic_anhydrase"/>
</dbReference>
<dbReference type="InterPro" id="IPR015892">
    <property type="entry name" value="Carbonic_anhydrase_CS"/>
</dbReference>
<dbReference type="InterPro" id="IPR036874">
    <property type="entry name" value="Carbonic_anhydrase_sf"/>
</dbReference>
<dbReference type="PANTHER" id="PTHR11002">
    <property type="entry name" value="CARBONIC ANHYDRASE"/>
    <property type="match status" value="1"/>
</dbReference>
<dbReference type="PANTHER" id="PTHR11002:SF51">
    <property type="entry name" value="CARBONIC ANHYDRASE"/>
    <property type="match status" value="1"/>
</dbReference>
<dbReference type="Pfam" id="PF00484">
    <property type="entry name" value="Pro_CA"/>
    <property type="match status" value="1"/>
</dbReference>
<dbReference type="SMART" id="SM00947">
    <property type="entry name" value="Pro_CA"/>
    <property type="match status" value="1"/>
</dbReference>
<dbReference type="SUPFAM" id="SSF53056">
    <property type="entry name" value="beta-carbonic anhydrase, cab"/>
    <property type="match status" value="1"/>
</dbReference>
<dbReference type="PROSITE" id="PS00704">
    <property type="entry name" value="PROK_CO2_ANHYDRASE_1"/>
    <property type="match status" value="1"/>
</dbReference>
<name>CAN_EMENI</name>
<comment type="function">
    <text evidence="1">Catalyzes the reversible hydration of CO(2) to H(2)CO(3). The main role may be to provide inorganic carbon for the bicarbonate-dependent carboxylation reactions catalyzed by pyruvate carboxylase, acetyl-CoA carboxylase and carbamoyl-phosphate synthetase (By similarity). Involved in osmoadaptation.</text>
</comment>
<comment type="catalytic activity">
    <reaction>
        <text>hydrogencarbonate + H(+) = CO2 + H2O</text>
        <dbReference type="Rhea" id="RHEA:10748"/>
        <dbReference type="ChEBI" id="CHEBI:15377"/>
        <dbReference type="ChEBI" id="CHEBI:15378"/>
        <dbReference type="ChEBI" id="CHEBI:16526"/>
        <dbReference type="ChEBI" id="CHEBI:17544"/>
        <dbReference type="EC" id="4.2.1.1"/>
    </reaction>
</comment>
<comment type="cofactor">
    <cofactor evidence="1">
        <name>Zn(2+)</name>
        <dbReference type="ChEBI" id="CHEBI:29105"/>
    </cofactor>
    <text evidence="1">Binds 1 zinc ion per subunit.</text>
</comment>
<comment type="induction">
    <text evidence="2">Down-regulated when grown with elevated levels of potassium chloride.</text>
</comment>
<comment type="similarity">
    <text evidence="3">Belongs to the beta-class carbonic anhydrase family.</text>
</comment>
<comment type="sequence caution" evidence="3">
    <conflict type="erroneous initiation">
        <sequence resource="EMBL-CDS" id="CBF85595"/>
    </conflict>
    <text>Extended N-terminus.</text>
</comment>
<comment type="sequence caution" evidence="3">
    <conflict type="erroneous gene model prediction">
        <sequence resource="EMBL-CDS" id="EAA64970"/>
    </conflict>
</comment>
<organism>
    <name type="scientific">Emericella nidulans (strain FGSC A4 / ATCC 38163 / CBS 112.46 / NRRL 194 / M139)</name>
    <name type="common">Aspergillus nidulans</name>
    <dbReference type="NCBI Taxonomy" id="227321"/>
    <lineage>
        <taxon>Eukaryota</taxon>
        <taxon>Fungi</taxon>
        <taxon>Dikarya</taxon>
        <taxon>Ascomycota</taxon>
        <taxon>Pezizomycotina</taxon>
        <taxon>Eurotiomycetes</taxon>
        <taxon>Eurotiomycetidae</taxon>
        <taxon>Eurotiales</taxon>
        <taxon>Aspergillaceae</taxon>
        <taxon>Aspergillus</taxon>
        <taxon>Aspergillus subgen. Nidulantes</taxon>
    </lineage>
</organism>
<accession>Q5BCC5</accession>
<accession>C8VPG4</accession>
<gene>
    <name type="ORF">AN1805</name>
</gene>
<feature type="chain" id="PRO_0000363403" description="Carbonic anhydrase">
    <location>
        <begin position="1"/>
        <end position="228"/>
    </location>
</feature>
<feature type="binding site" evidence="1">
    <location>
        <position position="56"/>
    </location>
    <ligand>
        <name>Zn(2+)</name>
        <dbReference type="ChEBI" id="CHEBI:29105"/>
    </ligand>
</feature>
<feature type="binding site" evidence="1">
    <location>
        <position position="58"/>
    </location>
    <ligand>
        <name>Zn(2+)</name>
        <dbReference type="ChEBI" id="CHEBI:29105"/>
    </ligand>
</feature>
<feature type="binding site" evidence="1">
    <location>
        <position position="112"/>
    </location>
    <ligand>
        <name>Zn(2+)</name>
        <dbReference type="ChEBI" id="CHEBI:29105"/>
    </ligand>
</feature>
<feature type="binding site" evidence="1">
    <location>
        <position position="115"/>
    </location>
    <ligand>
        <name>Zn(2+)</name>
        <dbReference type="ChEBI" id="CHEBI:29105"/>
    </ligand>
</feature>
<sequence length="228" mass="25485">MPDPSDRKAVTRYLEQTHDKIFESNRAWVASKKGADPEFFNKLAAGQSPEYLYIGCSDSRVPANEIMGLDAGEVFVHRNIANVVPTIDLSSMSVINYAVGHLKVKHIVVCGHYNCGGVQAALTPTDLGILNPWLRNIRDVYRLHEKELDAIEDDGERFNRLVELNVIESCRSVIKTAVVQQSYEENGFPIVHGWVFNLKDGLLKDLNIDFPGILADIQKIYNLTKGSS</sequence>
<reference key="1">
    <citation type="journal article" date="2005" name="Nature">
        <title>Sequencing of Aspergillus nidulans and comparative analysis with A. fumigatus and A. oryzae.</title>
        <authorList>
            <person name="Galagan J.E."/>
            <person name="Calvo S.E."/>
            <person name="Cuomo C."/>
            <person name="Ma L.-J."/>
            <person name="Wortman J.R."/>
            <person name="Batzoglou S."/>
            <person name="Lee S.-I."/>
            <person name="Bastuerkmen M."/>
            <person name="Spevak C.C."/>
            <person name="Clutterbuck J."/>
            <person name="Kapitonov V."/>
            <person name="Jurka J."/>
            <person name="Scazzocchio C."/>
            <person name="Farman M.L."/>
            <person name="Butler J."/>
            <person name="Purcell S."/>
            <person name="Harris S."/>
            <person name="Braus G.H."/>
            <person name="Draht O."/>
            <person name="Busch S."/>
            <person name="D'Enfert C."/>
            <person name="Bouchier C."/>
            <person name="Goldman G.H."/>
            <person name="Bell-Pedersen D."/>
            <person name="Griffiths-Jones S."/>
            <person name="Doonan J.H."/>
            <person name="Yu J."/>
            <person name="Vienken K."/>
            <person name="Pain A."/>
            <person name="Freitag M."/>
            <person name="Selker E.U."/>
            <person name="Archer D.B."/>
            <person name="Penalva M.A."/>
            <person name="Oakley B.R."/>
            <person name="Momany M."/>
            <person name="Tanaka T."/>
            <person name="Kumagai T."/>
            <person name="Asai K."/>
            <person name="Machida M."/>
            <person name="Nierman W.C."/>
            <person name="Denning D.W."/>
            <person name="Caddick M.X."/>
            <person name="Hynes M."/>
            <person name="Paoletti M."/>
            <person name="Fischer R."/>
            <person name="Miller B.L."/>
            <person name="Dyer P.S."/>
            <person name="Sachs M.S."/>
            <person name="Osmani S.A."/>
            <person name="Birren B.W."/>
        </authorList>
    </citation>
    <scope>NUCLEOTIDE SEQUENCE [LARGE SCALE GENOMIC DNA]</scope>
    <source>
        <strain>FGSC A4 / ATCC 38163 / CBS 112.46 / NRRL 194 / M139</strain>
    </source>
</reference>
<reference key="2">
    <citation type="journal article" date="2009" name="Fungal Genet. Biol.">
        <title>The 2008 update of the Aspergillus nidulans genome annotation: a community effort.</title>
        <authorList>
            <person name="Wortman J.R."/>
            <person name="Gilsenan J.M."/>
            <person name="Joardar V."/>
            <person name="Deegan J."/>
            <person name="Clutterbuck J."/>
            <person name="Andersen M.R."/>
            <person name="Archer D."/>
            <person name="Bencina M."/>
            <person name="Braus G."/>
            <person name="Coutinho P."/>
            <person name="von Dohren H."/>
            <person name="Doonan J."/>
            <person name="Driessen A.J."/>
            <person name="Durek P."/>
            <person name="Espeso E."/>
            <person name="Fekete E."/>
            <person name="Flipphi M."/>
            <person name="Estrada C.G."/>
            <person name="Geysens S."/>
            <person name="Goldman G."/>
            <person name="de Groot P.W."/>
            <person name="Hansen K."/>
            <person name="Harris S.D."/>
            <person name="Heinekamp T."/>
            <person name="Helmstaedt K."/>
            <person name="Henrissat B."/>
            <person name="Hofmann G."/>
            <person name="Homan T."/>
            <person name="Horio T."/>
            <person name="Horiuchi H."/>
            <person name="James S."/>
            <person name="Jones M."/>
            <person name="Karaffa L."/>
            <person name="Karanyi Z."/>
            <person name="Kato M."/>
            <person name="Keller N."/>
            <person name="Kelly D.E."/>
            <person name="Kiel J.A."/>
            <person name="Kim J.M."/>
            <person name="van der Klei I.J."/>
            <person name="Klis F.M."/>
            <person name="Kovalchuk A."/>
            <person name="Krasevec N."/>
            <person name="Kubicek C.P."/>
            <person name="Liu B."/>
            <person name="Maccabe A."/>
            <person name="Meyer V."/>
            <person name="Mirabito P."/>
            <person name="Miskei M."/>
            <person name="Mos M."/>
            <person name="Mullins J."/>
            <person name="Nelson D.R."/>
            <person name="Nielsen J."/>
            <person name="Oakley B.R."/>
            <person name="Osmani S.A."/>
            <person name="Pakula T."/>
            <person name="Paszewski A."/>
            <person name="Paulsen I."/>
            <person name="Pilsyk S."/>
            <person name="Pocsi I."/>
            <person name="Punt P.J."/>
            <person name="Ram A.F."/>
            <person name="Ren Q."/>
            <person name="Robellet X."/>
            <person name="Robson G."/>
            <person name="Seiboth B."/>
            <person name="van Solingen P."/>
            <person name="Specht T."/>
            <person name="Sun J."/>
            <person name="Taheri-Talesh N."/>
            <person name="Takeshita N."/>
            <person name="Ussery D."/>
            <person name="vanKuyk P.A."/>
            <person name="Visser H."/>
            <person name="van de Vondervoort P.J."/>
            <person name="de Vries R.P."/>
            <person name="Walton J."/>
            <person name="Xiang X."/>
            <person name="Xiong Y."/>
            <person name="Zeng A.P."/>
            <person name="Brandt B.W."/>
            <person name="Cornell M.J."/>
            <person name="van den Hondel C.A."/>
            <person name="Visser J."/>
            <person name="Oliver S.G."/>
            <person name="Turner G."/>
        </authorList>
    </citation>
    <scope>GENOME REANNOTATION</scope>
    <source>
        <strain>FGSC A4 / ATCC 38163 / CBS 112.46 / NRRL 194 / M139</strain>
    </source>
</reference>
<reference key="3">
    <citation type="journal article" date="2007" name="Fungal Genet. Biol.">
        <title>Proteome map of Aspergillus nidulans during osmoadaptation.</title>
        <authorList>
            <person name="Kim Y."/>
            <person name="Nandakumar M.P."/>
            <person name="Marten M.R."/>
        </authorList>
    </citation>
    <scope>INDUCTION</scope>
    <scope>IDENTIFICATION BY MASS SPECTROMETRY</scope>
</reference>
<evidence type="ECO:0000250" key="1"/>
<evidence type="ECO:0000269" key="2">
    <source>
    </source>
</evidence>
<evidence type="ECO:0000305" key="3"/>
<keyword id="KW-0456">Lyase</keyword>
<keyword id="KW-0479">Metal-binding</keyword>
<keyword id="KW-1185">Reference proteome</keyword>
<keyword id="KW-0346">Stress response</keyword>
<keyword id="KW-0862">Zinc</keyword>
<proteinExistence type="evidence at protein level"/>